<proteinExistence type="predicted"/>
<name>Y1295_METJA</name>
<protein>
    <recommendedName>
        <fullName>Uncharacterized protein MJ1295</fullName>
    </recommendedName>
</protein>
<sequence>MRFDFHTHTVFSDGELIPAELVRRARVLKHRAIAITDHADFSNYKELIEKTTIAKEELKKYWDDIIVIVGVELTHIPPKSIPKMAKKAKDLGAEIVVVHGETVVEPVEEKTNYYASISEDVDILAHPGFIDKETAENLKENDIFVEITSRRGHNITNGYVANIAREFGLKTLINTDTHAPEDLIDDEFAKKVGLGAGLTNKELENTLLHYPKELLKRI</sequence>
<accession>Q58691</accession>
<dbReference type="EMBL" id="L77117">
    <property type="protein sequence ID" value="AAB99302.1"/>
    <property type="molecule type" value="Genomic_DNA"/>
</dbReference>
<dbReference type="PIR" id="F64461">
    <property type="entry name" value="F64461"/>
</dbReference>
<dbReference type="RefSeq" id="WP_010870812.1">
    <property type="nucleotide sequence ID" value="NC_000909.1"/>
</dbReference>
<dbReference type="SMR" id="Q58691"/>
<dbReference type="STRING" id="243232.MJ_1295"/>
<dbReference type="PaxDb" id="243232-MJ_1295"/>
<dbReference type="DNASU" id="1452197"/>
<dbReference type="EnsemblBacteria" id="AAB99302">
    <property type="protein sequence ID" value="AAB99302"/>
    <property type="gene ID" value="MJ_1295"/>
</dbReference>
<dbReference type="GeneID" id="1452197"/>
<dbReference type="KEGG" id="mja:MJ_1295"/>
<dbReference type="eggNOG" id="arCOG00304">
    <property type="taxonomic scope" value="Archaea"/>
</dbReference>
<dbReference type="HOGENOM" id="CLU_106253_0_0_2"/>
<dbReference type="InParanoid" id="Q58691"/>
<dbReference type="OrthoDB" id="9968at2157"/>
<dbReference type="PhylomeDB" id="Q58691"/>
<dbReference type="Proteomes" id="UP000000805">
    <property type="component" value="Chromosome"/>
</dbReference>
<dbReference type="GO" id="GO:0035312">
    <property type="term" value="F:5'-3' DNA exonuclease activity"/>
    <property type="evidence" value="ECO:0000318"/>
    <property type="project" value="GO_Central"/>
</dbReference>
<dbReference type="GO" id="GO:0004534">
    <property type="term" value="F:5'-3' RNA exonuclease activity"/>
    <property type="evidence" value="ECO:0000318"/>
    <property type="project" value="GO_Central"/>
</dbReference>
<dbReference type="CDD" id="cd07432">
    <property type="entry name" value="PHP_HisPPase"/>
    <property type="match status" value="1"/>
</dbReference>
<dbReference type="FunFam" id="3.20.20.140:FF:000153">
    <property type="entry name" value="Uncharacterized protein MJ1295"/>
    <property type="match status" value="1"/>
</dbReference>
<dbReference type="Gene3D" id="3.20.20.140">
    <property type="entry name" value="Metal-dependent hydrolases"/>
    <property type="match status" value="1"/>
</dbReference>
<dbReference type="InterPro" id="IPR004013">
    <property type="entry name" value="PHP_dom"/>
</dbReference>
<dbReference type="InterPro" id="IPR050243">
    <property type="entry name" value="PHP_phosphatase"/>
</dbReference>
<dbReference type="InterPro" id="IPR003141">
    <property type="entry name" value="Pol/His_phosphatase_N"/>
</dbReference>
<dbReference type="InterPro" id="IPR016195">
    <property type="entry name" value="Pol/histidinol_Pase-like"/>
</dbReference>
<dbReference type="NCBIfam" id="NF004981">
    <property type="entry name" value="PRK06361.1"/>
    <property type="match status" value="1"/>
</dbReference>
<dbReference type="PANTHER" id="PTHR36928">
    <property type="entry name" value="PHOSPHATASE YCDX-RELATED"/>
    <property type="match status" value="1"/>
</dbReference>
<dbReference type="PANTHER" id="PTHR36928:SF1">
    <property type="entry name" value="PHOSPHATASE YCDX-RELATED"/>
    <property type="match status" value="1"/>
</dbReference>
<dbReference type="Pfam" id="PF02811">
    <property type="entry name" value="PHP"/>
    <property type="match status" value="1"/>
</dbReference>
<dbReference type="SMART" id="SM00481">
    <property type="entry name" value="POLIIIAc"/>
    <property type="match status" value="1"/>
</dbReference>
<dbReference type="SUPFAM" id="SSF89550">
    <property type="entry name" value="PHP domain-like"/>
    <property type="match status" value="1"/>
</dbReference>
<keyword id="KW-1185">Reference proteome</keyword>
<feature type="chain" id="PRO_0000107261" description="Uncharacterized protein MJ1295">
    <location>
        <begin position="1"/>
        <end position="218"/>
    </location>
</feature>
<gene>
    <name type="ordered locus">MJ1295</name>
</gene>
<organism>
    <name type="scientific">Methanocaldococcus jannaschii (strain ATCC 43067 / DSM 2661 / JAL-1 / JCM 10045 / NBRC 100440)</name>
    <name type="common">Methanococcus jannaschii</name>
    <dbReference type="NCBI Taxonomy" id="243232"/>
    <lineage>
        <taxon>Archaea</taxon>
        <taxon>Methanobacteriati</taxon>
        <taxon>Methanobacteriota</taxon>
        <taxon>Methanomada group</taxon>
        <taxon>Methanococci</taxon>
        <taxon>Methanococcales</taxon>
        <taxon>Methanocaldococcaceae</taxon>
        <taxon>Methanocaldococcus</taxon>
    </lineage>
</organism>
<reference key="1">
    <citation type="journal article" date="1996" name="Science">
        <title>Complete genome sequence of the methanogenic archaeon, Methanococcus jannaschii.</title>
        <authorList>
            <person name="Bult C.J."/>
            <person name="White O."/>
            <person name="Olsen G.J."/>
            <person name="Zhou L."/>
            <person name="Fleischmann R.D."/>
            <person name="Sutton G.G."/>
            <person name="Blake J.A."/>
            <person name="FitzGerald L.M."/>
            <person name="Clayton R.A."/>
            <person name="Gocayne J.D."/>
            <person name="Kerlavage A.R."/>
            <person name="Dougherty B.A."/>
            <person name="Tomb J.-F."/>
            <person name="Adams M.D."/>
            <person name="Reich C.I."/>
            <person name="Overbeek R."/>
            <person name="Kirkness E.F."/>
            <person name="Weinstock K.G."/>
            <person name="Merrick J.M."/>
            <person name="Glodek A."/>
            <person name="Scott J.L."/>
            <person name="Geoghagen N.S.M."/>
            <person name="Weidman J.F."/>
            <person name="Fuhrmann J.L."/>
            <person name="Nguyen D."/>
            <person name="Utterback T.R."/>
            <person name="Kelley J.M."/>
            <person name="Peterson J.D."/>
            <person name="Sadow P.W."/>
            <person name="Hanna M.C."/>
            <person name="Cotton M.D."/>
            <person name="Roberts K.M."/>
            <person name="Hurst M.A."/>
            <person name="Kaine B.P."/>
            <person name="Borodovsky M."/>
            <person name="Klenk H.-P."/>
            <person name="Fraser C.M."/>
            <person name="Smith H.O."/>
            <person name="Woese C.R."/>
            <person name="Venter J.C."/>
        </authorList>
    </citation>
    <scope>NUCLEOTIDE SEQUENCE [LARGE SCALE GENOMIC DNA]</scope>
    <source>
        <strain>ATCC 43067 / DSM 2661 / JAL-1 / JCM 10045 / NBRC 100440</strain>
    </source>
</reference>